<protein>
    <recommendedName>
        <fullName evidence="1">Ribosomal RNA large subunit methyltransferase M</fullName>
        <ecNumber evidence="1">2.1.1.186</ecNumber>
    </recommendedName>
    <alternativeName>
        <fullName evidence="1">23S rRNA (cytidine2498-2'-O)-methyltransferase</fullName>
    </alternativeName>
    <alternativeName>
        <fullName evidence="1">23S rRNA 2'-O-ribose methyltransferase RlmM</fullName>
    </alternativeName>
</protein>
<evidence type="ECO:0000255" key="1">
    <source>
        <dbReference type="HAMAP-Rule" id="MF_01551"/>
    </source>
</evidence>
<sequence length="347" mass="38959">MSGLLCYCRPGFEPELAAELSVRAAFVGIAGYARTQRNDGYVLFVCDEAAQLAAKLQWRELIFARQKLVVIAELKGIDPKDRITPILAALDGQQRFGDLWVEHPDSDAGKPLAGLARSFGNALRPALRKAGLLTDKPQPRQPRLHVCFLDGDHALLAVADSADSAPWPLGIPRLKLLPEAPSRSALKLDEALLTLLTPEERDALVKPGMRAADLGAAPGGWTWVLTRQHVHVTSVDNGPLREHVLETGLVEHLRADGFHWKPAQPLDWMVCDMVEQPRRVAERMATWVREGWCRNTIFNLKLPMKKRWDETRLCLDLFEQQAERSLSVRAKQLYHDREEITVLAMRD</sequence>
<dbReference type="EC" id="2.1.1.186" evidence="1"/>
<dbReference type="EMBL" id="AE008923">
    <property type="protein sequence ID" value="AAM35777.1"/>
    <property type="molecule type" value="Genomic_DNA"/>
</dbReference>
<dbReference type="RefSeq" id="WP_011050598.1">
    <property type="nucleotide sequence ID" value="NC_003919.1"/>
</dbReference>
<dbReference type="SMR" id="Q8PNZ9"/>
<dbReference type="GeneID" id="66910077"/>
<dbReference type="KEGG" id="xac:XAC0889"/>
<dbReference type="eggNOG" id="COG2933">
    <property type="taxonomic scope" value="Bacteria"/>
</dbReference>
<dbReference type="HOGENOM" id="CLU_043780_0_0_6"/>
<dbReference type="Proteomes" id="UP000000576">
    <property type="component" value="Chromosome"/>
</dbReference>
<dbReference type="GO" id="GO:0005737">
    <property type="term" value="C:cytoplasm"/>
    <property type="evidence" value="ECO:0007669"/>
    <property type="project" value="UniProtKB-SubCell"/>
</dbReference>
<dbReference type="GO" id="GO:0008757">
    <property type="term" value="F:S-adenosylmethionine-dependent methyltransferase activity"/>
    <property type="evidence" value="ECO:0007669"/>
    <property type="project" value="UniProtKB-UniRule"/>
</dbReference>
<dbReference type="GO" id="GO:0032259">
    <property type="term" value="P:methylation"/>
    <property type="evidence" value="ECO:0007669"/>
    <property type="project" value="UniProtKB-KW"/>
</dbReference>
<dbReference type="GO" id="GO:0006364">
    <property type="term" value="P:rRNA processing"/>
    <property type="evidence" value="ECO:0007669"/>
    <property type="project" value="UniProtKB-UniRule"/>
</dbReference>
<dbReference type="Gene3D" id="3.30.2300.20">
    <property type="match status" value="1"/>
</dbReference>
<dbReference type="Gene3D" id="3.30.70.2810">
    <property type="match status" value="1"/>
</dbReference>
<dbReference type="Gene3D" id="3.40.50.150">
    <property type="entry name" value="Vaccinia Virus protein VP39"/>
    <property type="match status" value="1"/>
</dbReference>
<dbReference type="HAMAP" id="MF_01551">
    <property type="entry name" value="23SrRNA_methyltr_M"/>
    <property type="match status" value="1"/>
</dbReference>
<dbReference type="InterPro" id="IPR040739">
    <property type="entry name" value="RlmM_FDX"/>
</dbReference>
<dbReference type="InterPro" id="IPR048646">
    <property type="entry name" value="RlmM_THUMP-like"/>
</dbReference>
<dbReference type="InterPro" id="IPR002877">
    <property type="entry name" value="RNA_MeTrfase_FtsJ_dom"/>
</dbReference>
<dbReference type="InterPro" id="IPR011224">
    <property type="entry name" value="rRNA_MeTrfase_M"/>
</dbReference>
<dbReference type="InterPro" id="IPR029063">
    <property type="entry name" value="SAM-dependent_MTases_sf"/>
</dbReference>
<dbReference type="NCBIfam" id="NF008734">
    <property type="entry name" value="PRK11760.1"/>
    <property type="match status" value="1"/>
</dbReference>
<dbReference type="PANTHER" id="PTHR37524">
    <property type="entry name" value="RIBOSOMAL RNA LARGE SUBUNIT METHYLTRANSFERASE M"/>
    <property type="match status" value="1"/>
</dbReference>
<dbReference type="PANTHER" id="PTHR37524:SF2">
    <property type="entry name" value="RIBOSOMAL RNA METHYLTRANSFERASE FTSJ DOMAIN-CONTAINING PROTEIN"/>
    <property type="match status" value="1"/>
</dbReference>
<dbReference type="Pfam" id="PF01728">
    <property type="entry name" value="FtsJ"/>
    <property type="match status" value="1"/>
</dbReference>
<dbReference type="Pfam" id="PF18125">
    <property type="entry name" value="RlmM_FDX"/>
    <property type="match status" value="1"/>
</dbReference>
<dbReference type="Pfam" id="PF21239">
    <property type="entry name" value="RLMM_N"/>
    <property type="match status" value="1"/>
</dbReference>
<dbReference type="PIRSF" id="PIRSF028774">
    <property type="entry name" value="UCP028774"/>
    <property type="match status" value="1"/>
</dbReference>
<dbReference type="SUPFAM" id="SSF53335">
    <property type="entry name" value="S-adenosyl-L-methionine-dependent methyltransferases"/>
    <property type="match status" value="1"/>
</dbReference>
<accession>Q8PNZ9</accession>
<keyword id="KW-0963">Cytoplasm</keyword>
<keyword id="KW-0489">Methyltransferase</keyword>
<keyword id="KW-0698">rRNA processing</keyword>
<keyword id="KW-0949">S-adenosyl-L-methionine</keyword>
<keyword id="KW-0808">Transferase</keyword>
<organism>
    <name type="scientific">Xanthomonas axonopodis pv. citri (strain 306)</name>
    <dbReference type="NCBI Taxonomy" id="190486"/>
    <lineage>
        <taxon>Bacteria</taxon>
        <taxon>Pseudomonadati</taxon>
        <taxon>Pseudomonadota</taxon>
        <taxon>Gammaproteobacteria</taxon>
        <taxon>Lysobacterales</taxon>
        <taxon>Lysobacteraceae</taxon>
        <taxon>Xanthomonas</taxon>
    </lineage>
</organism>
<reference key="1">
    <citation type="journal article" date="2002" name="Nature">
        <title>Comparison of the genomes of two Xanthomonas pathogens with differing host specificities.</title>
        <authorList>
            <person name="da Silva A.C.R."/>
            <person name="Ferro J.A."/>
            <person name="Reinach F.C."/>
            <person name="Farah C.S."/>
            <person name="Furlan L.R."/>
            <person name="Quaggio R.B."/>
            <person name="Monteiro-Vitorello C.B."/>
            <person name="Van Sluys M.A."/>
            <person name="Almeida N.F. Jr."/>
            <person name="Alves L.M.C."/>
            <person name="do Amaral A.M."/>
            <person name="Bertolini M.C."/>
            <person name="Camargo L.E.A."/>
            <person name="Camarotte G."/>
            <person name="Cannavan F."/>
            <person name="Cardozo J."/>
            <person name="Chambergo F."/>
            <person name="Ciapina L.P."/>
            <person name="Cicarelli R.M.B."/>
            <person name="Coutinho L.L."/>
            <person name="Cursino-Santos J.R."/>
            <person name="El-Dorry H."/>
            <person name="Faria J.B."/>
            <person name="Ferreira A.J.S."/>
            <person name="Ferreira R.C.C."/>
            <person name="Ferro M.I.T."/>
            <person name="Formighieri E.F."/>
            <person name="Franco M.C."/>
            <person name="Greggio C.C."/>
            <person name="Gruber A."/>
            <person name="Katsuyama A.M."/>
            <person name="Kishi L.T."/>
            <person name="Leite R.P."/>
            <person name="Lemos E.G.M."/>
            <person name="Lemos M.V.F."/>
            <person name="Locali E.C."/>
            <person name="Machado M.A."/>
            <person name="Madeira A.M.B.N."/>
            <person name="Martinez-Rossi N.M."/>
            <person name="Martins E.C."/>
            <person name="Meidanis J."/>
            <person name="Menck C.F.M."/>
            <person name="Miyaki C.Y."/>
            <person name="Moon D.H."/>
            <person name="Moreira L.M."/>
            <person name="Novo M.T.M."/>
            <person name="Okura V.K."/>
            <person name="Oliveira M.C."/>
            <person name="Oliveira V.R."/>
            <person name="Pereira H.A."/>
            <person name="Rossi A."/>
            <person name="Sena J.A.D."/>
            <person name="Silva C."/>
            <person name="de Souza R.F."/>
            <person name="Spinola L.A.F."/>
            <person name="Takita M.A."/>
            <person name="Tamura R.E."/>
            <person name="Teixeira E.C."/>
            <person name="Tezza R.I.D."/>
            <person name="Trindade dos Santos M."/>
            <person name="Truffi D."/>
            <person name="Tsai S.M."/>
            <person name="White F.F."/>
            <person name="Setubal J.C."/>
            <person name="Kitajima J.P."/>
        </authorList>
    </citation>
    <scope>NUCLEOTIDE SEQUENCE [LARGE SCALE GENOMIC DNA]</scope>
    <source>
        <strain>306</strain>
    </source>
</reference>
<feature type="chain" id="PRO_0000070433" description="Ribosomal RNA large subunit methyltransferase M">
    <location>
        <begin position="1"/>
        <end position="347"/>
    </location>
</feature>
<feature type="active site" description="Proton acceptor" evidence="1">
    <location>
        <position position="301"/>
    </location>
</feature>
<feature type="binding site" evidence="1">
    <location>
        <position position="184"/>
    </location>
    <ligand>
        <name>S-adenosyl-L-methionine</name>
        <dbReference type="ChEBI" id="CHEBI:59789"/>
    </ligand>
</feature>
<feature type="binding site" evidence="1">
    <location>
        <begin position="217"/>
        <end position="220"/>
    </location>
    <ligand>
        <name>S-adenosyl-L-methionine</name>
        <dbReference type="ChEBI" id="CHEBI:59789"/>
    </ligand>
</feature>
<feature type="binding site" evidence="1">
    <location>
        <position position="236"/>
    </location>
    <ligand>
        <name>S-adenosyl-L-methionine</name>
        <dbReference type="ChEBI" id="CHEBI:59789"/>
    </ligand>
</feature>
<feature type="binding site" evidence="1">
    <location>
        <position position="256"/>
    </location>
    <ligand>
        <name>S-adenosyl-L-methionine</name>
        <dbReference type="ChEBI" id="CHEBI:59789"/>
    </ligand>
</feature>
<feature type="binding site" evidence="1">
    <location>
        <position position="272"/>
    </location>
    <ligand>
        <name>S-adenosyl-L-methionine</name>
        <dbReference type="ChEBI" id="CHEBI:59789"/>
    </ligand>
</feature>
<comment type="function">
    <text evidence="1">Catalyzes the 2'-O-methylation at nucleotide C2498 in 23S rRNA.</text>
</comment>
<comment type="catalytic activity">
    <reaction evidence="1">
        <text>cytidine(2498) in 23S rRNA + S-adenosyl-L-methionine = 2'-O-methylcytidine(2498) in 23S rRNA + S-adenosyl-L-homocysteine + H(+)</text>
        <dbReference type="Rhea" id="RHEA:42788"/>
        <dbReference type="Rhea" id="RHEA-COMP:10244"/>
        <dbReference type="Rhea" id="RHEA-COMP:10245"/>
        <dbReference type="ChEBI" id="CHEBI:15378"/>
        <dbReference type="ChEBI" id="CHEBI:57856"/>
        <dbReference type="ChEBI" id="CHEBI:59789"/>
        <dbReference type="ChEBI" id="CHEBI:74495"/>
        <dbReference type="ChEBI" id="CHEBI:82748"/>
        <dbReference type="EC" id="2.1.1.186"/>
    </reaction>
</comment>
<comment type="subunit">
    <text evidence="1">Monomer.</text>
</comment>
<comment type="subcellular location">
    <subcellularLocation>
        <location evidence="1">Cytoplasm</location>
    </subcellularLocation>
</comment>
<comment type="similarity">
    <text evidence="1">Belongs to the class I-like SAM-binding methyltransferase superfamily. RNA methyltransferase RlmE family. RlmM subfamily.</text>
</comment>
<gene>
    <name evidence="1" type="primary">rlmM</name>
    <name type="ordered locus">XAC0889</name>
</gene>
<name>RLMM_XANAC</name>
<proteinExistence type="inferred from homology"/>